<evidence type="ECO:0000250" key="1">
    <source>
        <dbReference type="UniProtKB" id="O68718"/>
    </source>
</evidence>
<evidence type="ECO:0000250" key="2">
    <source>
        <dbReference type="UniProtKB" id="Q6VE93"/>
    </source>
</evidence>
<evidence type="ECO:0000305" key="3"/>
<proteinExistence type="inferred from homology"/>
<keyword id="KW-0012">Acyltransferase</keyword>
<keyword id="KW-0614">Plasmid</keyword>
<keyword id="KW-1185">Reference proteome</keyword>
<keyword id="KW-0808">Transferase</keyword>
<feature type="chain" id="PRO_0000200908" description="Serine/threonine-protein acetyltransferase NGR_a02610">
    <location>
        <begin position="1"/>
        <end position="260"/>
    </location>
</feature>
<feature type="active site" evidence="2">
    <location>
        <position position="123"/>
    </location>
</feature>
<feature type="active site" evidence="2">
    <location>
        <position position="143"/>
    </location>
</feature>
<feature type="active site" evidence="2">
    <location>
        <position position="185"/>
    </location>
</feature>
<feature type="binding site" evidence="2">
    <location>
        <position position="123"/>
    </location>
    <ligand>
        <name>CoA</name>
        <dbReference type="ChEBI" id="CHEBI:57287"/>
    </ligand>
</feature>
<feature type="binding site" evidence="2">
    <location>
        <begin position="180"/>
        <end position="181"/>
    </location>
    <ligand>
        <name>CoA</name>
        <dbReference type="ChEBI" id="CHEBI:57287"/>
    </ligand>
</feature>
<geneLocation type="plasmid">
    <name>sym pNGR234a</name>
</geneLocation>
<comment type="function">
    <text evidence="1">Serine/threonine-protein acetyltransferase translocated into infected cells, which mediates acetylation of serine and threonine residues of host target proteins.</text>
</comment>
<comment type="catalytic activity">
    <reaction evidence="1">
        <text>L-threonyl-[protein] + acetyl-CoA = O-acetyl-L-threonyl-[protein] + CoA</text>
        <dbReference type="Rhea" id="RHEA:65340"/>
        <dbReference type="Rhea" id="RHEA-COMP:11060"/>
        <dbReference type="Rhea" id="RHEA-COMP:16780"/>
        <dbReference type="ChEBI" id="CHEBI:30013"/>
        <dbReference type="ChEBI" id="CHEBI:57287"/>
        <dbReference type="ChEBI" id="CHEBI:57288"/>
        <dbReference type="ChEBI" id="CHEBI:141025"/>
    </reaction>
    <physiologicalReaction direction="left-to-right" evidence="1">
        <dbReference type="Rhea" id="RHEA:65341"/>
    </physiologicalReaction>
</comment>
<comment type="catalytic activity">
    <reaction evidence="1">
        <text>L-seryl-[protein] + acetyl-CoA = O-acetyl-L-seryl-[protein] + CoA</text>
        <dbReference type="Rhea" id="RHEA:59392"/>
        <dbReference type="Rhea" id="RHEA-COMP:9863"/>
        <dbReference type="Rhea" id="RHEA-COMP:15352"/>
        <dbReference type="ChEBI" id="CHEBI:29999"/>
        <dbReference type="ChEBI" id="CHEBI:57287"/>
        <dbReference type="ChEBI" id="CHEBI:57288"/>
        <dbReference type="ChEBI" id="CHEBI:141128"/>
    </reaction>
    <physiologicalReaction direction="left-to-right" evidence="1">
        <dbReference type="Rhea" id="RHEA:59393"/>
    </physiologicalReaction>
</comment>
<comment type="similarity">
    <text evidence="3">Belongs to the acetyltransferase YopJ family.</text>
</comment>
<gene>
    <name type="ordered locus">NGR_a02610</name>
    <name type="ORF">y4lO</name>
</gene>
<accession>P55555</accession>
<dbReference type="EC" id="2.3.1.-" evidence="1"/>
<dbReference type="EMBL" id="U00090">
    <property type="protein sequence ID" value="AAB92459.1"/>
    <property type="molecule type" value="Genomic_DNA"/>
</dbReference>
<dbReference type="RefSeq" id="NP_443964.1">
    <property type="nucleotide sequence ID" value="NC_000914.2"/>
</dbReference>
<dbReference type="RefSeq" id="WP_010875286.1">
    <property type="nucleotide sequence ID" value="NC_000914.2"/>
</dbReference>
<dbReference type="SMR" id="P55555"/>
<dbReference type="KEGG" id="rhi:NGR_a02610"/>
<dbReference type="eggNOG" id="ENOG5032VKN">
    <property type="taxonomic scope" value="Bacteria"/>
</dbReference>
<dbReference type="HOGENOM" id="CLU_1069097_0_0_5"/>
<dbReference type="OrthoDB" id="8945160at2"/>
<dbReference type="Proteomes" id="UP000001054">
    <property type="component" value="Plasmid pNGR234a"/>
</dbReference>
<dbReference type="GO" id="GO:0016746">
    <property type="term" value="F:acyltransferase activity"/>
    <property type="evidence" value="ECO:0007669"/>
    <property type="project" value="UniProtKB-KW"/>
</dbReference>
<dbReference type="InterPro" id="IPR005083">
    <property type="entry name" value="YopJ-like"/>
</dbReference>
<dbReference type="Pfam" id="PF03421">
    <property type="entry name" value="Acetyltransf_14"/>
    <property type="match status" value="1"/>
</dbReference>
<name>Y4LO_SINFN</name>
<sequence>MQLSRRAEIGNPSSRNLSPRINEKVELLGQALEHARRAGMSSSLMEYGRQVARHLSANVQPDEKILSLDIRNLPLLAASYNRRYPDLDLRHMDSPARFFDALNDRSSDGAWRAVVRLADGEQHHVAADVRTRAGAAPTIIVMEGANFYTFVASYFKLRGDSFRQLGTQAKWAFIEVGAQKSAADCVMFGVQFALAAYRELPTFDAWHDNLHHHGTIAHEGDYSSDYMPRRHAGICANKPFSWGEVPPSDLLQALSLQQCN</sequence>
<reference key="1">
    <citation type="journal article" date="1997" name="Nature">
        <title>Molecular basis of symbiosis between Rhizobium and legumes.</title>
        <authorList>
            <person name="Freiberg C.A."/>
            <person name="Fellay R."/>
            <person name="Bairoch A."/>
            <person name="Broughton W.J."/>
            <person name="Rosenthal A."/>
            <person name="Perret X."/>
        </authorList>
    </citation>
    <scope>NUCLEOTIDE SEQUENCE [LARGE SCALE GENOMIC DNA]</scope>
    <source>
        <strain>NBRC 101917 / NGR234</strain>
    </source>
</reference>
<reference key="2">
    <citation type="journal article" date="2009" name="Appl. Environ. Microbiol.">
        <title>Rhizobium sp. strain NGR234 possesses a remarkable number of secretion systems.</title>
        <authorList>
            <person name="Schmeisser C."/>
            <person name="Liesegang H."/>
            <person name="Krysciak D."/>
            <person name="Bakkou N."/>
            <person name="Le Quere A."/>
            <person name="Wollherr A."/>
            <person name="Heinemeyer I."/>
            <person name="Morgenstern B."/>
            <person name="Pommerening-Roeser A."/>
            <person name="Flores M."/>
            <person name="Palacios R."/>
            <person name="Brenner S."/>
            <person name="Gottschalk G."/>
            <person name="Schmitz R.A."/>
            <person name="Broughton W.J."/>
            <person name="Perret X."/>
            <person name="Strittmatter A.W."/>
            <person name="Streit W.R."/>
        </authorList>
    </citation>
    <scope>NUCLEOTIDE SEQUENCE [LARGE SCALE GENOMIC DNA]</scope>
    <source>
        <strain>NBRC 101917 / NGR234</strain>
    </source>
</reference>
<protein>
    <recommendedName>
        <fullName>Serine/threonine-protein acetyltransferase NGR_a02610</fullName>
        <ecNumber evidence="1">2.3.1.-</ecNumber>
    </recommendedName>
</protein>
<organism>
    <name type="scientific">Sinorhizobium fredii (strain NBRC 101917 / NGR234)</name>
    <dbReference type="NCBI Taxonomy" id="394"/>
    <lineage>
        <taxon>Bacteria</taxon>
        <taxon>Pseudomonadati</taxon>
        <taxon>Pseudomonadota</taxon>
        <taxon>Alphaproteobacteria</taxon>
        <taxon>Hyphomicrobiales</taxon>
        <taxon>Rhizobiaceae</taxon>
        <taxon>Sinorhizobium/Ensifer group</taxon>
        <taxon>Sinorhizobium</taxon>
    </lineage>
</organism>